<organism>
    <name type="scientific">Rhopalurus junceus</name>
    <name type="common">Caribbean blue scorpion</name>
    <dbReference type="NCBI Taxonomy" id="419285"/>
    <lineage>
        <taxon>Eukaryota</taxon>
        <taxon>Metazoa</taxon>
        <taxon>Ecdysozoa</taxon>
        <taxon>Arthropoda</taxon>
        <taxon>Chelicerata</taxon>
        <taxon>Arachnida</taxon>
        <taxon>Scorpiones</taxon>
        <taxon>Buthida</taxon>
        <taxon>Buthoidea</taxon>
        <taxon>Buthidae</taxon>
        <taxon>Rhopalurus</taxon>
    </lineage>
</organism>
<proteinExistence type="evidence at transcript level"/>
<dbReference type="EMBL" id="HM233939">
    <property type="protein sequence ID" value="ADV16817.1"/>
    <property type="molecule type" value="mRNA"/>
</dbReference>
<dbReference type="SMR" id="E7CLN0"/>
<dbReference type="GO" id="GO:0005576">
    <property type="term" value="C:extracellular region"/>
    <property type="evidence" value="ECO:0007669"/>
    <property type="project" value="UniProtKB-SubCell"/>
</dbReference>
<dbReference type="GO" id="GO:0019871">
    <property type="term" value="F:sodium channel inhibitor activity"/>
    <property type="evidence" value="ECO:0007669"/>
    <property type="project" value="InterPro"/>
</dbReference>
<dbReference type="GO" id="GO:0090729">
    <property type="term" value="F:toxin activity"/>
    <property type="evidence" value="ECO:0007669"/>
    <property type="project" value="UniProtKB-KW"/>
</dbReference>
<dbReference type="GO" id="GO:0006952">
    <property type="term" value="P:defense response"/>
    <property type="evidence" value="ECO:0007669"/>
    <property type="project" value="InterPro"/>
</dbReference>
<dbReference type="CDD" id="cd23106">
    <property type="entry name" value="neurotoxins_LC_scorpion"/>
    <property type="match status" value="1"/>
</dbReference>
<dbReference type="FunFam" id="3.30.30.10:FF:000002">
    <property type="entry name" value="Alpha-like toxin BmK-M1"/>
    <property type="match status" value="1"/>
</dbReference>
<dbReference type="Gene3D" id="3.30.30.10">
    <property type="entry name" value="Knottin, scorpion toxin-like"/>
    <property type="match status" value="1"/>
</dbReference>
<dbReference type="InterPro" id="IPR044062">
    <property type="entry name" value="LCN-type_CS_alpha_beta_dom"/>
</dbReference>
<dbReference type="InterPro" id="IPR003614">
    <property type="entry name" value="Scorpion_toxin-like"/>
</dbReference>
<dbReference type="InterPro" id="IPR036574">
    <property type="entry name" value="Scorpion_toxin-like_sf"/>
</dbReference>
<dbReference type="InterPro" id="IPR018218">
    <property type="entry name" value="Scorpion_toxinL"/>
</dbReference>
<dbReference type="InterPro" id="IPR002061">
    <property type="entry name" value="Scorpion_toxinL/defensin"/>
</dbReference>
<dbReference type="Pfam" id="PF00537">
    <property type="entry name" value="Toxin_3"/>
    <property type="match status" value="1"/>
</dbReference>
<dbReference type="PRINTS" id="PR00285">
    <property type="entry name" value="SCORPNTOXIN"/>
</dbReference>
<dbReference type="SMART" id="SM00505">
    <property type="entry name" value="Knot1"/>
    <property type="match status" value="1"/>
</dbReference>
<dbReference type="SUPFAM" id="SSF57095">
    <property type="entry name" value="Scorpion toxin-like"/>
    <property type="match status" value="1"/>
</dbReference>
<dbReference type="PROSITE" id="PS51863">
    <property type="entry name" value="LCN_CSAB"/>
    <property type="match status" value="1"/>
</dbReference>
<accession>E7CLN0</accession>
<comment type="function">
    <text evidence="1">Beta toxins bind voltage-independently at site-4 of sodium channels (Nav) and shift the voltage of activation toward more negative potentials thereby affecting sodium channel activation and promoting spontaneous and repetitive firing.</text>
</comment>
<comment type="subcellular location">
    <subcellularLocation>
        <location evidence="2">Secreted</location>
    </subcellularLocation>
</comment>
<comment type="tissue specificity">
    <text evidence="7">Expressed by the venom gland.</text>
</comment>
<comment type="domain">
    <text evidence="6">Has the structural arrangement of an alpha-helix connected to antiparallel beta-sheets by disulfide bonds (CS-alpha/beta).</text>
</comment>
<comment type="similarity">
    <text evidence="4">Belongs to the long (4 C-C) scorpion toxin superfamily. Sodium channel inhibitor family. Beta subfamily.</text>
</comment>
<feature type="chain" id="PRO_0000413452" description="Putative beta-neurotoxin RjAa2">
    <location>
        <begin position="1"/>
        <end position="65"/>
    </location>
</feature>
<feature type="domain" description="LCN-type CS-alpha/beta" evidence="5">
    <location>
        <begin position="1"/>
        <end position="64"/>
    </location>
</feature>
<feature type="disulfide bond" evidence="5">
    <location>
        <begin position="11"/>
        <end position="63"/>
    </location>
</feature>
<feature type="disulfide bond" evidence="5">
    <location>
        <begin position="15"/>
        <end position="37"/>
    </location>
</feature>
<feature type="disulfide bond" evidence="5">
    <location>
        <begin position="22"/>
        <end position="44"/>
    </location>
</feature>
<feature type="disulfide bond" evidence="5">
    <location>
        <begin position="26"/>
        <end position="46"/>
    </location>
</feature>
<feature type="non-terminal residue" evidence="8">
    <location>
        <position position="1"/>
    </location>
</feature>
<sequence>KEGYPMGRDGCKISCVINNNFCKVECQAKWRQSDGYCYFWGLSCYCTNLPEDAQVWDSSTNKCGG</sequence>
<evidence type="ECO:0000250" key="1"/>
<evidence type="ECO:0000250" key="2">
    <source>
        <dbReference type="UniProtKB" id="P15226"/>
    </source>
</evidence>
<evidence type="ECO:0000250" key="3">
    <source>
        <dbReference type="UniProtKB" id="Q1I176"/>
    </source>
</evidence>
<evidence type="ECO:0000255" key="4"/>
<evidence type="ECO:0000255" key="5">
    <source>
        <dbReference type="PROSITE-ProRule" id="PRU01210"/>
    </source>
</evidence>
<evidence type="ECO:0000305" key="6"/>
<evidence type="ECO:0000305" key="7">
    <source>
    </source>
</evidence>
<evidence type="ECO:0000312" key="8">
    <source>
        <dbReference type="EMBL" id="ADV16817.1"/>
    </source>
</evidence>
<reference evidence="8" key="1">
    <citation type="journal article" date="2011" name="Toxicon">
        <title>Biochemical and molecular characterization of the venom from the Cuban scorpion Rhopalurus junceus.</title>
        <authorList>
            <person name="Garcia-Gomez B.I."/>
            <person name="Coronas F.I."/>
            <person name="Restano-Cassulini R."/>
            <person name="Rodriguez R.R."/>
            <person name="Possani L.D."/>
        </authorList>
    </citation>
    <scope>NUCLEOTIDE SEQUENCE [MRNA]</scope>
    <source>
        <tissue evidence="8">Venom gland</tissue>
    </source>
</reference>
<protein>
    <recommendedName>
        <fullName evidence="3">Putative beta-neurotoxin RjAa2</fullName>
    </recommendedName>
</protein>
<keyword id="KW-1015">Disulfide bond</keyword>
<keyword id="KW-0872">Ion channel impairing toxin</keyword>
<keyword id="KW-0528">Neurotoxin</keyword>
<keyword id="KW-0964">Secreted</keyword>
<keyword id="KW-0800">Toxin</keyword>
<keyword id="KW-0738">Voltage-gated sodium channel impairing toxin</keyword>
<name>SCX2_RHOJU</name>